<proteinExistence type="inferred from homology"/>
<protein>
    <recommendedName>
        <fullName evidence="8">T cell receptor alpha variable 9-2</fullName>
    </recommendedName>
</protein>
<comment type="function">
    <text evidence="3 5 6 7">V region of the variable domain of T cell receptor (TR) alpha chain that participates in the antigen recognition (PubMed:24600447). Alpha-beta T cell receptors are antigen specific receptors which are essential to the immune response and are present on the cell surface of T lymphocytes. Recognize peptide-major histocompatibility (MH) (pMH) complexes that are displayed by antigen presenting cells (APC), a prerequisite for efficient T cell adaptive immunity against pathogens (PubMed:25493333). Binding of alpha-beta TR to pMH complex initiates TR-CD3 clustering on the cell surface and intracellular activation of LCK that phosphorylates the ITAM motifs of CD3G, CD3D, CD3E and CD247 enabling the recruitment of ZAP70. In turn ZAP70 phosphorylates LAT, which recruits numerous signaling molecules to form the LAT signalosome. The LAT signalosome propagates signal branching to three major signaling pathways, the calcium, the mitogen-activated protein kinase (MAPK) kinase and the nuclear factor NF-kappa-B (NF-kB) pathways, leading to the mobilization of transcription factors that are critical for gene expression and essential for T cell growth and differentiation (PubMed:23524462). The T cell repertoire is generated in the thymus, by V-(D)-J rearrangement. This repertoire is then shaped by intrathymic selection events to generate a peripheral T cell pool of self-MH restricted, non-autoaggressive T cells. Post-thymic interaction of alpha-beta TR with the pMH complexes shapes TR structural and functional avidity (PubMed:15040585).</text>
</comment>
<comment type="subunit">
    <text evidence="4">Alpha-beta TR is a heterodimer composed of an alpha and beta chain; disulfide-linked. The alpha-beta TR is associated with the transmembrane signaling CD3 coreceptor proteins to form the TR-CD3 (TcR or TCR). The assembly of alpha-beta TR heterodimers with CD3 occurs in the endoplasmic reticulum where a single alpha-beta TR heterodimer associates with one CD3D-CD3E heterodimer, one CD3G-CD3E heterodimer and one CD247 homodimer forming a stable octameric structure. CD3D-CD3E and CD3G-CD3E heterodimers preferentially associate with TR alpha and TR beta chains, respectively. The association of the CD247 homodimer is the last step of TcR assembly in the endoplasmic reticulum and is required for transport to the cell surface.</text>
</comment>
<comment type="subcellular location">
    <subcellularLocation>
        <location evidence="4">Cell membrane</location>
    </subcellularLocation>
</comment>
<comment type="polymorphism">
    <text evidence="9">There are several alleles. The sequence shown is that of IMGT allele TRAV9-2*01.</text>
</comment>
<gene>
    <name evidence="8" type="primary">TRAV9-2</name>
</gene>
<dbReference type="EMBL" id="AC243980">
    <property type="status" value="NOT_ANNOTATED_CDS"/>
    <property type="molecule type" value="Genomic_DNA"/>
</dbReference>
<dbReference type="SMR" id="A0A087WT02"/>
<dbReference type="FunCoup" id="A0A087WT02">
    <property type="interactions" value="341"/>
</dbReference>
<dbReference type="IMGT_GENE-DB" id="TRAV9-2"/>
<dbReference type="GlyCosmos" id="A0A087WT02">
    <property type="glycosylation" value="1 site, No reported glycans"/>
</dbReference>
<dbReference type="GlyGen" id="A0A087WT02">
    <property type="glycosylation" value="1 site"/>
</dbReference>
<dbReference type="BioMuta" id="TRAV9-2"/>
<dbReference type="Ensembl" id="ENST00000390441.2">
    <property type="protein sequence ID" value="ENSP00000452011.1"/>
    <property type="gene ID" value="ENSG00000211793.2"/>
</dbReference>
<dbReference type="UCSC" id="uc032atm.2">
    <property type="organism name" value="human"/>
</dbReference>
<dbReference type="AGR" id="HGNC:12154"/>
<dbReference type="GeneCards" id="TRAV9-2"/>
<dbReference type="HGNC" id="HGNC:12154">
    <property type="gene designation" value="TRAV9-2"/>
</dbReference>
<dbReference type="HPA" id="ENSG00000211793">
    <property type="expression patterns" value="Tissue enriched (lymphoid)"/>
</dbReference>
<dbReference type="neXtProt" id="NX_A0A087WT02"/>
<dbReference type="OpenTargets" id="ENSG00000211793"/>
<dbReference type="VEuPathDB" id="HostDB:ENSG00000211793"/>
<dbReference type="GeneTree" id="ENSGT00940000154455"/>
<dbReference type="HOGENOM" id="CLU_077975_8_0_1"/>
<dbReference type="InParanoid" id="A0A087WT02"/>
<dbReference type="OMA" id="HATHRAG"/>
<dbReference type="OrthoDB" id="8947657at2759"/>
<dbReference type="PAN-GO" id="A0A087WT02">
    <property type="GO annotations" value="3 GO annotations based on evolutionary models"/>
</dbReference>
<dbReference type="PathwayCommons" id="A0A087WT02"/>
<dbReference type="ChiTaRS" id="TRAV9-2">
    <property type="organism name" value="human"/>
</dbReference>
<dbReference type="Pharos" id="A0A087WT02">
    <property type="development level" value="Tdark"/>
</dbReference>
<dbReference type="PRO" id="PR:A0A087WT02"/>
<dbReference type="Proteomes" id="UP000005640">
    <property type="component" value="Chromosome 14"/>
</dbReference>
<dbReference type="RNAct" id="A0A087WT02">
    <property type="molecule type" value="protein"/>
</dbReference>
<dbReference type="Bgee" id="ENSG00000211793">
    <property type="expression patterns" value="Expressed in granulocyte and 91 other cell types or tissues"/>
</dbReference>
<dbReference type="GO" id="GO:0042101">
    <property type="term" value="C:T cell receptor complex"/>
    <property type="evidence" value="ECO:0007669"/>
    <property type="project" value="UniProtKB-KW"/>
</dbReference>
<dbReference type="GO" id="GO:0002250">
    <property type="term" value="P:adaptive immune response"/>
    <property type="evidence" value="ECO:0007669"/>
    <property type="project" value="UniProtKB-KW"/>
</dbReference>
<dbReference type="FunFam" id="2.60.40.10:FF:001318">
    <property type="entry name" value="T cell receptor alpha constant"/>
    <property type="match status" value="1"/>
</dbReference>
<dbReference type="Gene3D" id="2.60.40.10">
    <property type="entry name" value="Immunoglobulins"/>
    <property type="match status" value="1"/>
</dbReference>
<dbReference type="InterPro" id="IPR007110">
    <property type="entry name" value="Ig-like_dom"/>
</dbReference>
<dbReference type="InterPro" id="IPR036179">
    <property type="entry name" value="Ig-like_dom_sf"/>
</dbReference>
<dbReference type="InterPro" id="IPR013783">
    <property type="entry name" value="Ig-like_fold"/>
</dbReference>
<dbReference type="InterPro" id="IPR013106">
    <property type="entry name" value="Ig_V-set"/>
</dbReference>
<dbReference type="InterPro" id="IPR051287">
    <property type="entry name" value="TCR_variable_region"/>
</dbReference>
<dbReference type="PANTHER" id="PTHR19367:SF48">
    <property type="entry name" value="T CELL RECEPTOR ALPHA VARIABLE 9-2"/>
    <property type="match status" value="1"/>
</dbReference>
<dbReference type="PANTHER" id="PTHR19367">
    <property type="entry name" value="T-CELL RECEPTOR ALPHA CHAIN V REGION"/>
    <property type="match status" value="1"/>
</dbReference>
<dbReference type="Pfam" id="PF07686">
    <property type="entry name" value="V-set"/>
    <property type="match status" value="1"/>
</dbReference>
<dbReference type="SMART" id="SM00406">
    <property type="entry name" value="IGv"/>
    <property type="match status" value="1"/>
</dbReference>
<dbReference type="SUPFAM" id="SSF48726">
    <property type="entry name" value="Immunoglobulin"/>
    <property type="match status" value="1"/>
</dbReference>
<dbReference type="PROSITE" id="PS50835">
    <property type="entry name" value="IG_LIKE"/>
    <property type="match status" value="1"/>
</dbReference>
<accession>A0A087WT02</accession>
<keyword id="KW-1064">Adaptive immunity</keyword>
<keyword id="KW-1003">Cell membrane</keyword>
<keyword id="KW-1015">Disulfide bond</keyword>
<keyword id="KW-0325">Glycoprotein</keyword>
<keyword id="KW-0391">Immunity</keyword>
<keyword id="KW-0393">Immunoglobulin domain</keyword>
<keyword id="KW-0472">Membrane</keyword>
<keyword id="KW-0675">Receptor</keyword>
<keyword id="KW-1185">Reference proteome</keyword>
<keyword id="KW-0732">Signal</keyword>
<keyword id="KW-1279">T cell receptor</keyword>
<sequence length="112" mass="12289">MNYSPGLVSLILLLLGRTRGDSVTQMEGPVTLSEEAFLTINCTYTATGYPSLFWYVQYPGEGLQLLLKATKADDKGSNKGFEATYRKETTSFHLEKGSVQVSDSAVYFCALS</sequence>
<reference key="1">
    <citation type="journal article" date="2003" name="Nature">
        <title>The DNA sequence and analysis of human chromosome 14.</title>
        <authorList>
            <person name="Heilig R."/>
            <person name="Eckenberg R."/>
            <person name="Petit J.-L."/>
            <person name="Fonknechten N."/>
            <person name="Da Silva C."/>
            <person name="Cattolico L."/>
            <person name="Levy M."/>
            <person name="Barbe V."/>
            <person name="De Berardinis V."/>
            <person name="Ureta-Vidal A."/>
            <person name="Pelletier E."/>
            <person name="Vico V."/>
            <person name="Anthouard V."/>
            <person name="Rowen L."/>
            <person name="Madan A."/>
            <person name="Qin S."/>
            <person name="Sun H."/>
            <person name="Du H."/>
            <person name="Pepin K."/>
            <person name="Artiguenave F."/>
            <person name="Robert C."/>
            <person name="Cruaud C."/>
            <person name="Bruels T."/>
            <person name="Jaillon O."/>
            <person name="Friedlander L."/>
            <person name="Samson G."/>
            <person name="Brottier P."/>
            <person name="Cure S."/>
            <person name="Segurens B."/>
            <person name="Aniere F."/>
            <person name="Samain S."/>
            <person name="Crespeau H."/>
            <person name="Abbasi N."/>
            <person name="Aiach N."/>
            <person name="Boscus D."/>
            <person name="Dickhoff R."/>
            <person name="Dors M."/>
            <person name="Dubois I."/>
            <person name="Friedman C."/>
            <person name="Gouyvenoux M."/>
            <person name="James R."/>
            <person name="Madan A."/>
            <person name="Mairey-Estrada B."/>
            <person name="Mangenot S."/>
            <person name="Martins N."/>
            <person name="Menard M."/>
            <person name="Oztas S."/>
            <person name="Ratcliffe A."/>
            <person name="Shaffer T."/>
            <person name="Trask B."/>
            <person name="Vacherie B."/>
            <person name="Bellemere C."/>
            <person name="Belser C."/>
            <person name="Besnard-Gonnet M."/>
            <person name="Bartol-Mavel D."/>
            <person name="Boutard M."/>
            <person name="Briez-Silla S."/>
            <person name="Combette S."/>
            <person name="Dufosse-Laurent V."/>
            <person name="Ferron C."/>
            <person name="Lechaplais C."/>
            <person name="Louesse C."/>
            <person name="Muselet D."/>
            <person name="Magdelenat G."/>
            <person name="Pateau E."/>
            <person name="Petit E."/>
            <person name="Sirvain-Trukniewicz P."/>
            <person name="Trybou A."/>
            <person name="Vega-Czarny N."/>
            <person name="Bataille E."/>
            <person name="Bluet E."/>
            <person name="Bordelais I."/>
            <person name="Dubois M."/>
            <person name="Dumont C."/>
            <person name="Guerin T."/>
            <person name="Haffray S."/>
            <person name="Hammadi R."/>
            <person name="Muanga J."/>
            <person name="Pellouin V."/>
            <person name="Robert D."/>
            <person name="Wunderle E."/>
            <person name="Gauguet G."/>
            <person name="Roy A."/>
            <person name="Sainte-Marthe L."/>
            <person name="Verdier J."/>
            <person name="Verdier-Discala C."/>
            <person name="Hillier L.W."/>
            <person name="Fulton L."/>
            <person name="McPherson J."/>
            <person name="Matsuda F."/>
            <person name="Wilson R."/>
            <person name="Scarpelli C."/>
            <person name="Gyapay G."/>
            <person name="Wincker P."/>
            <person name="Saurin W."/>
            <person name="Quetier F."/>
            <person name="Waterston R."/>
            <person name="Hood L."/>
            <person name="Weissenbach J."/>
        </authorList>
    </citation>
    <scope>NUCLEOTIDE SEQUENCE [LARGE SCALE GENOMIC DNA] (IMGT ALLELE TRAV9-2*01)</scope>
</reference>
<reference key="2">
    <citation type="book" date="2001" name="The T Cell Receptor FactsBook.">
        <title>The T Cell Receptor FactsBook.</title>
        <editorList>
            <person name="Lefranc M.P."/>
            <person name="Lefranc G."/>
        </editorList>
        <authorList>
            <person name="Lefranc M.P."/>
            <person name="Lefranc G."/>
        </authorList>
    </citation>
    <scope>NOMENCLATURE</scope>
</reference>
<reference key="3">
    <citation type="journal article" date="2004" name="Nat. Rev. Immunol.">
        <title>The many important facets of T-cell repertoire diversity.</title>
        <authorList>
            <person name="Nikolich-Zugich J."/>
            <person name="Slifka M.K."/>
            <person name="Messaoudi I."/>
        </authorList>
    </citation>
    <scope>REVIEW ON T CELL REPERTOIRE DIVERSITY</scope>
</reference>
<reference key="4">
    <citation type="journal article" date="2010" name="Cold Spring Harb. Perspect. Biol.">
        <title>Structural biology of the T-cell receptor: insights into receptor assembly, ligand recognition, and initiation of signaling.</title>
        <authorList>
            <person name="Wucherpfennig K.W."/>
            <person name="Gagnon E."/>
            <person name="Call M.J."/>
            <person name="Huseby E.S."/>
            <person name="Call M.E."/>
        </authorList>
    </citation>
    <scope>REVIEW ON T CELL RECEPTOR-CD3 COMPLEX ASSEMBLY</scope>
    <scope>SUBCELLULAR LOCATION</scope>
</reference>
<reference key="5">
    <citation type="journal article" date="2013" name="Nat. Rev. Immunol.">
        <title>T cell receptor signalling networks: branched, diversified and bounded.</title>
        <authorList>
            <person name="Brownlie R.J."/>
            <person name="Zamoyska R."/>
        </authorList>
    </citation>
    <scope>REVIEW ON T CELL RECEPTOR SIGNALING</scope>
</reference>
<reference key="6">
    <citation type="journal article" date="2014" name="Front. Immunol.">
        <title>Immunoglobulin and T Cell Receptor Genes: IMGT((R)) and the Birth and Rise of Immunoinformatics.</title>
        <authorList>
            <person name="Lefranc M.P."/>
        </authorList>
    </citation>
    <scope>NOMENCLATURE</scope>
</reference>
<reference key="7">
    <citation type="journal article" date="2015" name="Annu. Rev. Immunol.">
        <title>T cell antigen receptor recognition of antigen-presenting molecules.</title>
        <authorList>
            <person name="Rossjohn J."/>
            <person name="Gras S."/>
            <person name="Miles J.J."/>
            <person name="Turner S.J."/>
            <person name="Godfrey D.I."/>
            <person name="McCluskey J."/>
        </authorList>
    </citation>
    <scope>REVIEW ON FUNCTION</scope>
</reference>
<feature type="signal peptide" evidence="1">
    <location>
        <begin position="1"/>
        <end position="20"/>
    </location>
</feature>
<feature type="chain" id="PRO_0000443262" description="T cell receptor alpha variable 9-2" evidence="1">
    <location>
        <begin position="21"/>
        <end position="112"/>
    </location>
</feature>
<feature type="domain" description="Ig-like" evidence="2">
    <location>
        <begin position="21"/>
        <end position="112" status="greater than"/>
    </location>
</feature>
<feature type="glycosylation site" description="N-linked (GlcNAc...) asparagine" evidence="1">
    <location>
        <position position="41"/>
    </location>
</feature>
<feature type="disulfide bond" evidence="2">
    <location>
        <begin position="42"/>
        <end position="109"/>
    </location>
</feature>
<feature type="non-terminal residue">
    <location>
        <position position="112"/>
    </location>
</feature>
<name>TVA92_HUMAN</name>
<evidence type="ECO:0000255" key="1"/>
<evidence type="ECO:0000255" key="2">
    <source>
        <dbReference type="PROSITE-ProRule" id="PRU00114"/>
    </source>
</evidence>
<evidence type="ECO:0000303" key="3">
    <source>
    </source>
</evidence>
<evidence type="ECO:0000303" key="4">
    <source>
    </source>
</evidence>
<evidence type="ECO:0000303" key="5">
    <source>
    </source>
</evidence>
<evidence type="ECO:0000303" key="6">
    <source>
    </source>
</evidence>
<evidence type="ECO:0000303" key="7">
    <source>
    </source>
</evidence>
<evidence type="ECO:0000303" key="8">
    <source ref="2"/>
</evidence>
<evidence type="ECO:0000305" key="9"/>
<organism>
    <name type="scientific">Homo sapiens</name>
    <name type="common">Human</name>
    <dbReference type="NCBI Taxonomy" id="9606"/>
    <lineage>
        <taxon>Eukaryota</taxon>
        <taxon>Metazoa</taxon>
        <taxon>Chordata</taxon>
        <taxon>Craniata</taxon>
        <taxon>Vertebrata</taxon>
        <taxon>Euteleostomi</taxon>
        <taxon>Mammalia</taxon>
        <taxon>Eutheria</taxon>
        <taxon>Euarchontoglires</taxon>
        <taxon>Primates</taxon>
        <taxon>Haplorrhini</taxon>
        <taxon>Catarrhini</taxon>
        <taxon>Hominidae</taxon>
        <taxon>Homo</taxon>
    </lineage>
</organism>